<accession>Q8FJQ3</accession>
<proteinExistence type="inferred from homology"/>
<gene>
    <name evidence="1" type="primary">bioB</name>
    <name type="ordered locus">c0855</name>
</gene>
<protein>
    <recommendedName>
        <fullName evidence="1">Biotin synthase</fullName>
        <ecNumber evidence="1">2.8.1.6</ecNumber>
    </recommendedName>
</protein>
<evidence type="ECO:0000255" key="1">
    <source>
        <dbReference type="HAMAP-Rule" id="MF_01694"/>
    </source>
</evidence>
<evidence type="ECO:0000255" key="2">
    <source>
        <dbReference type="PROSITE-ProRule" id="PRU01266"/>
    </source>
</evidence>
<comment type="function">
    <text evidence="1">Catalyzes the conversion of dethiobiotin (DTB) to biotin by the insertion of a sulfur atom into dethiobiotin via a radical-based mechanism.</text>
</comment>
<comment type="catalytic activity">
    <reaction evidence="1">
        <text>(4R,5S)-dethiobiotin + (sulfur carrier)-SH + 2 reduced [2Fe-2S]-[ferredoxin] + 2 S-adenosyl-L-methionine = (sulfur carrier)-H + biotin + 2 5'-deoxyadenosine + 2 L-methionine + 2 oxidized [2Fe-2S]-[ferredoxin]</text>
        <dbReference type="Rhea" id="RHEA:22060"/>
        <dbReference type="Rhea" id="RHEA-COMP:10000"/>
        <dbReference type="Rhea" id="RHEA-COMP:10001"/>
        <dbReference type="Rhea" id="RHEA-COMP:14737"/>
        <dbReference type="Rhea" id="RHEA-COMP:14739"/>
        <dbReference type="ChEBI" id="CHEBI:17319"/>
        <dbReference type="ChEBI" id="CHEBI:29917"/>
        <dbReference type="ChEBI" id="CHEBI:33737"/>
        <dbReference type="ChEBI" id="CHEBI:33738"/>
        <dbReference type="ChEBI" id="CHEBI:57586"/>
        <dbReference type="ChEBI" id="CHEBI:57844"/>
        <dbReference type="ChEBI" id="CHEBI:59789"/>
        <dbReference type="ChEBI" id="CHEBI:64428"/>
        <dbReference type="ChEBI" id="CHEBI:149473"/>
        <dbReference type="EC" id="2.8.1.6"/>
    </reaction>
</comment>
<comment type="cofactor">
    <cofactor evidence="1">
        <name>[4Fe-4S] cluster</name>
        <dbReference type="ChEBI" id="CHEBI:49883"/>
    </cofactor>
    <text evidence="1">Binds 1 [4Fe-4S] cluster. The cluster is coordinated with 3 cysteines and an exchangeable S-adenosyl-L-methionine.</text>
</comment>
<comment type="cofactor">
    <cofactor evidence="1">
        <name>[2Fe-2S] cluster</name>
        <dbReference type="ChEBI" id="CHEBI:190135"/>
    </cofactor>
    <text evidence="1">Binds 1 [2Fe-2S] cluster. The cluster is coordinated with 3 cysteines and 1 arginine.</text>
</comment>
<comment type="pathway">
    <text evidence="1">Cofactor biosynthesis; biotin biosynthesis; biotin from 7,8-diaminononanoate: step 2/2.</text>
</comment>
<comment type="subunit">
    <text evidence="1">Homodimer.</text>
</comment>
<comment type="similarity">
    <text evidence="1">Belongs to the radical SAM superfamily. Biotin synthase family.</text>
</comment>
<sequence>MAHRPRWTLSQVTELFEKPLLDLLFEAQQVHRQHFDPRQVQVSTLLSIKTGACPEDCKYCPQSSRYKTGLEAERLMEVEQVLESARKAKAAGSTRFCMGAAWKNPHERDMPYLEQMVQGVKAMGLEACMTLGTLSESQAQRLANAGLDYYNHNLDTSPEFYGNIITTRTYQERLDTLEKVREAGIKVCSGGIVGLGETVKDRAGLLLQLANLPTPPESVPINMLVKVKGTPLADNDDVDAFDFIRTIAVARIMMPTSYVRLSAGREQMNEQTQAMCFMAGANSIFYGCKLLTTPNPEEDKDLQLFRKLGLNPQQTAVLAGDNEQQQRLEQALMTPDTDEYYNAAAL</sequence>
<reference key="1">
    <citation type="journal article" date="2002" name="Proc. Natl. Acad. Sci. U.S.A.">
        <title>Extensive mosaic structure revealed by the complete genome sequence of uropathogenic Escherichia coli.</title>
        <authorList>
            <person name="Welch R.A."/>
            <person name="Burland V."/>
            <person name="Plunkett G. III"/>
            <person name="Redford P."/>
            <person name="Roesch P."/>
            <person name="Rasko D."/>
            <person name="Buckles E.L."/>
            <person name="Liou S.-R."/>
            <person name="Boutin A."/>
            <person name="Hackett J."/>
            <person name="Stroud D."/>
            <person name="Mayhew G.F."/>
            <person name="Rose D.J."/>
            <person name="Zhou S."/>
            <person name="Schwartz D.C."/>
            <person name="Perna N.T."/>
            <person name="Mobley H.L.T."/>
            <person name="Donnenberg M.S."/>
            <person name="Blattner F.R."/>
        </authorList>
    </citation>
    <scope>NUCLEOTIDE SEQUENCE [LARGE SCALE GENOMIC DNA]</scope>
    <source>
        <strain>CFT073 / ATCC 700928 / UPEC</strain>
    </source>
</reference>
<keyword id="KW-0001">2Fe-2S</keyword>
<keyword id="KW-0004">4Fe-4S</keyword>
<keyword id="KW-0093">Biotin biosynthesis</keyword>
<keyword id="KW-0408">Iron</keyword>
<keyword id="KW-0411">Iron-sulfur</keyword>
<keyword id="KW-0479">Metal-binding</keyword>
<keyword id="KW-1185">Reference proteome</keyword>
<keyword id="KW-0949">S-adenosyl-L-methionine</keyword>
<keyword id="KW-0808">Transferase</keyword>
<feature type="chain" id="PRO_0000381368" description="Biotin synthase">
    <location>
        <begin position="1"/>
        <end position="346"/>
    </location>
</feature>
<feature type="domain" description="Radical SAM core" evidence="2">
    <location>
        <begin position="38"/>
        <end position="256"/>
    </location>
</feature>
<feature type="binding site" evidence="1">
    <location>
        <position position="53"/>
    </location>
    <ligand>
        <name>[4Fe-4S] cluster</name>
        <dbReference type="ChEBI" id="CHEBI:49883"/>
        <note>4Fe-4S-S-AdoMet</note>
    </ligand>
</feature>
<feature type="binding site" evidence="1">
    <location>
        <position position="57"/>
    </location>
    <ligand>
        <name>[4Fe-4S] cluster</name>
        <dbReference type="ChEBI" id="CHEBI:49883"/>
        <note>4Fe-4S-S-AdoMet</note>
    </ligand>
</feature>
<feature type="binding site" evidence="1">
    <location>
        <position position="60"/>
    </location>
    <ligand>
        <name>[4Fe-4S] cluster</name>
        <dbReference type="ChEBI" id="CHEBI:49883"/>
        <note>4Fe-4S-S-AdoMet</note>
    </ligand>
</feature>
<feature type="binding site" evidence="1">
    <location>
        <position position="97"/>
    </location>
    <ligand>
        <name>[2Fe-2S] cluster</name>
        <dbReference type="ChEBI" id="CHEBI:190135"/>
    </ligand>
</feature>
<feature type="binding site" evidence="1">
    <location>
        <position position="128"/>
    </location>
    <ligand>
        <name>[2Fe-2S] cluster</name>
        <dbReference type="ChEBI" id="CHEBI:190135"/>
    </ligand>
</feature>
<feature type="binding site" evidence="1">
    <location>
        <position position="188"/>
    </location>
    <ligand>
        <name>[2Fe-2S] cluster</name>
        <dbReference type="ChEBI" id="CHEBI:190135"/>
    </ligand>
</feature>
<feature type="binding site" evidence="1">
    <location>
        <position position="260"/>
    </location>
    <ligand>
        <name>[2Fe-2S] cluster</name>
        <dbReference type="ChEBI" id="CHEBI:190135"/>
    </ligand>
</feature>
<dbReference type="EC" id="2.8.1.6" evidence="1"/>
<dbReference type="EMBL" id="AE014075">
    <property type="protein sequence ID" value="AAN79328.1"/>
    <property type="molecule type" value="Genomic_DNA"/>
</dbReference>
<dbReference type="RefSeq" id="WP_000951218.1">
    <property type="nucleotide sequence ID" value="NZ_CP051263.1"/>
</dbReference>
<dbReference type="SMR" id="Q8FJQ3"/>
<dbReference type="STRING" id="199310.c0855"/>
<dbReference type="KEGG" id="ecc:c0855"/>
<dbReference type="eggNOG" id="COG0502">
    <property type="taxonomic scope" value="Bacteria"/>
</dbReference>
<dbReference type="HOGENOM" id="CLU_033172_1_2_6"/>
<dbReference type="BioCyc" id="ECOL199310:C0855-MONOMER"/>
<dbReference type="UniPathway" id="UPA00078">
    <property type="reaction ID" value="UER00162"/>
</dbReference>
<dbReference type="Proteomes" id="UP000001410">
    <property type="component" value="Chromosome"/>
</dbReference>
<dbReference type="GO" id="GO:0051537">
    <property type="term" value="F:2 iron, 2 sulfur cluster binding"/>
    <property type="evidence" value="ECO:0007669"/>
    <property type="project" value="UniProtKB-KW"/>
</dbReference>
<dbReference type="GO" id="GO:0051539">
    <property type="term" value="F:4 iron, 4 sulfur cluster binding"/>
    <property type="evidence" value="ECO:0007669"/>
    <property type="project" value="UniProtKB-KW"/>
</dbReference>
<dbReference type="GO" id="GO:0004076">
    <property type="term" value="F:biotin synthase activity"/>
    <property type="evidence" value="ECO:0007669"/>
    <property type="project" value="UniProtKB-UniRule"/>
</dbReference>
<dbReference type="GO" id="GO:0005506">
    <property type="term" value="F:iron ion binding"/>
    <property type="evidence" value="ECO:0007669"/>
    <property type="project" value="UniProtKB-UniRule"/>
</dbReference>
<dbReference type="GO" id="GO:0009102">
    <property type="term" value="P:biotin biosynthetic process"/>
    <property type="evidence" value="ECO:0007669"/>
    <property type="project" value="UniProtKB-UniRule"/>
</dbReference>
<dbReference type="CDD" id="cd01335">
    <property type="entry name" value="Radical_SAM"/>
    <property type="match status" value="1"/>
</dbReference>
<dbReference type="FunFam" id="3.20.20.70:FF:000011">
    <property type="entry name" value="Biotin synthase"/>
    <property type="match status" value="1"/>
</dbReference>
<dbReference type="Gene3D" id="3.20.20.70">
    <property type="entry name" value="Aldolase class I"/>
    <property type="match status" value="1"/>
</dbReference>
<dbReference type="HAMAP" id="MF_01694">
    <property type="entry name" value="BioB"/>
    <property type="match status" value="1"/>
</dbReference>
<dbReference type="InterPro" id="IPR013785">
    <property type="entry name" value="Aldolase_TIM"/>
</dbReference>
<dbReference type="InterPro" id="IPR010722">
    <property type="entry name" value="BATS_dom"/>
</dbReference>
<dbReference type="InterPro" id="IPR002684">
    <property type="entry name" value="Biotin_synth/BioAB"/>
</dbReference>
<dbReference type="InterPro" id="IPR024177">
    <property type="entry name" value="Biotin_synthase"/>
</dbReference>
<dbReference type="InterPro" id="IPR006638">
    <property type="entry name" value="Elp3/MiaA/NifB-like_rSAM"/>
</dbReference>
<dbReference type="InterPro" id="IPR007197">
    <property type="entry name" value="rSAM"/>
</dbReference>
<dbReference type="NCBIfam" id="TIGR00433">
    <property type="entry name" value="bioB"/>
    <property type="match status" value="1"/>
</dbReference>
<dbReference type="PANTHER" id="PTHR22976">
    <property type="entry name" value="BIOTIN SYNTHASE"/>
    <property type="match status" value="1"/>
</dbReference>
<dbReference type="PANTHER" id="PTHR22976:SF2">
    <property type="entry name" value="BIOTIN SYNTHASE, MITOCHONDRIAL"/>
    <property type="match status" value="1"/>
</dbReference>
<dbReference type="Pfam" id="PF06968">
    <property type="entry name" value="BATS"/>
    <property type="match status" value="1"/>
</dbReference>
<dbReference type="Pfam" id="PF04055">
    <property type="entry name" value="Radical_SAM"/>
    <property type="match status" value="1"/>
</dbReference>
<dbReference type="PIRSF" id="PIRSF001619">
    <property type="entry name" value="Biotin_synth"/>
    <property type="match status" value="1"/>
</dbReference>
<dbReference type="SFLD" id="SFLDG01060">
    <property type="entry name" value="BATS_domain_containing"/>
    <property type="match status" value="1"/>
</dbReference>
<dbReference type="SFLD" id="SFLDF00272">
    <property type="entry name" value="biotin_synthase"/>
    <property type="match status" value="1"/>
</dbReference>
<dbReference type="SMART" id="SM00876">
    <property type="entry name" value="BATS"/>
    <property type="match status" value="1"/>
</dbReference>
<dbReference type="SMART" id="SM00729">
    <property type="entry name" value="Elp3"/>
    <property type="match status" value="1"/>
</dbReference>
<dbReference type="SUPFAM" id="SSF102114">
    <property type="entry name" value="Radical SAM enzymes"/>
    <property type="match status" value="1"/>
</dbReference>
<dbReference type="PROSITE" id="PS51918">
    <property type="entry name" value="RADICAL_SAM"/>
    <property type="match status" value="1"/>
</dbReference>
<organism>
    <name type="scientific">Escherichia coli O6:H1 (strain CFT073 / ATCC 700928 / UPEC)</name>
    <dbReference type="NCBI Taxonomy" id="199310"/>
    <lineage>
        <taxon>Bacteria</taxon>
        <taxon>Pseudomonadati</taxon>
        <taxon>Pseudomonadota</taxon>
        <taxon>Gammaproteobacteria</taxon>
        <taxon>Enterobacterales</taxon>
        <taxon>Enterobacteriaceae</taxon>
        <taxon>Escherichia</taxon>
    </lineage>
</organism>
<name>BIOB_ECOL6</name>